<reference evidence="5" key="1">
    <citation type="journal article" date="2012" name="Syst. Biol.">
        <title>Peptidomics-based phylogeny and biogeography of Mantophasmatodea (Hexapoda).</title>
        <authorList>
            <person name="Predel R."/>
            <person name="Neupert S."/>
            <person name="Huetteroth W."/>
            <person name="Kahnt J."/>
            <person name="Waidelich D."/>
            <person name="Roth S."/>
        </authorList>
    </citation>
    <scope>PROTEIN SEQUENCE</scope>
    <scope>AMIDATION AT LEU-8</scope>
    <source>
        <tissue evidence="3">Corpora cardiaca</tissue>
    </source>
</reference>
<sequence>DPPFSPRL</sequence>
<feature type="peptide" id="PRO_0000421595" description="Pyrokinin-3" evidence="3">
    <location>
        <begin position="1"/>
        <end position="8"/>
    </location>
</feature>
<feature type="modified residue" description="Leucine amide" evidence="3">
    <location>
        <position position="8"/>
    </location>
</feature>
<proteinExistence type="evidence at protein level"/>
<organism>
    <name type="scientific">Karoophasma biedouwense</name>
    <name type="common">Gladiator</name>
    <name type="synonym">Heel-walker</name>
    <dbReference type="NCBI Taxonomy" id="253133"/>
    <lineage>
        <taxon>Eukaryota</taxon>
        <taxon>Metazoa</taxon>
        <taxon>Ecdysozoa</taxon>
        <taxon>Arthropoda</taxon>
        <taxon>Hexapoda</taxon>
        <taxon>Insecta</taxon>
        <taxon>Pterygota</taxon>
        <taxon>Neoptera</taxon>
        <taxon>Polyneoptera</taxon>
        <taxon>Mantophasmatodea</taxon>
        <taxon>Austrophasmatidae</taxon>
        <taxon>Karoophasma</taxon>
    </lineage>
</organism>
<protein>
    <recommendedName>
        <fullName evidence="4">Pyrokinin-3</fullName>
        <shortName evidence="4">PK-3</shortName>
    </recommendedName>
    <alternativeName>
        <fullName evidence="1">FXPRL-amide</fullName>
    </alternativeName>
</protein>
<evidence type="ECO:0000250" key="1">
    <source>
        <dbReference type="UniProtKB" id="P82619"/>
    </source>
</evidence>
<evidence type="ECO:0000255" key="2"/>
<evidence type="ECO:0000269" key="3">
    <source>
    </source>
</evidence>
<evidence type="ECO:0000303" key="4">
    <source>
    </source>
</evidence>
<evidence type="ECO:0000305" key="5"/>
<evidence type="ECO:0000305" key="6">
    <source>
    </source>
</evidence>
<name>PPK3_KARBI</name>
<comment type="function">
    <text evidence="1">Myoactive.</text>
</comment>
<comment type="subcellular location">
    <subcellularLocation>
        <location evidence="6">Secreted</location>
    </subcellularLocation>
</comment>
<comment type="similarity">
    <text evidence="2">Belongs to the pyrokinin family.</text>
</comment>
<accession>B3A074</accession>
<keyword id="KW-0027">Amidation</keyword>
<keyword id="KW-0903">Direct protein sequencing</keyword>
<keyword id="KW-0527">Neuropeptide</keyword>
<keyword id="KW-0964">Secreted</keyword>
<dbReference type="GO" id="GO:0005576">
    <property type="term" value="C:extracellular region"/>
    <property type="evidence" value="ECO:0007669"/>
    <property type="project" value="UniProtKB-SubCell"/>
</dbReference>
<dbReference type="GO" id="GO:0007218">
    <property type="term" value="P:neuropeptide signaling pathway"/>
    <property type="evidence" value="ECO:0007669"/>
    <property type="project" value="UniProtKB-KW"/>
</dbReference>
<dbReference type="PROSITE" id="PS00539">
    <property type="entry name" value="PYROKININ"/>
    <property type="match status" value="1"/>
</dbReference>